<accession>Q15SZ5</accession>
<sequence>MTTKFFIGTAIAVSVLSACSSLEERQIASGNFEYTKQQPGHDIQVPADVDRPNFSQAYKLPALDADAPRNFIGKKLKVVSPALVLPLVTGSHVDDGSKDAKVFFDQVDDSQPLDTTIWNSLLSYLEEQGIGIESFDKDKQRLVTDWVVAKEILDDHWYSWSSVERDTSQRFEFDLEMKPHGRTATLNAHLVDYKERQGEAVVAEKSDVDSRAKEVDILNKVIGHYEYQIRVADAKRLREIRRGMQITIGQDGEDAPAFIIDSNYDTAWPRVLLVLRKLGFDVKDYDKSNGLLFVKYNGTESGWWDSVWSNDENALPLEKQEYRFRVEDAGEHTSLTVLDNESTPFTKDKLSGLYDVFARVMADDNLDI</sequence>
<organism>
    <name type="scientific">Pseudoalteromonas atlantica (strain T6c / ATCC BAA-1087)</name>
    <dbReference type="NCBI Taxonomy" id="3042615"/>
    <lineage>
        <taxon>Bacteria</taxon>
        <taxon>Pseudomonadati</taxon>
        <taxon>Pseudomonadota</taxon>
        <taxon>Gammaproteobacteria</taxon>
        <taxon>Alteromonadales</taxon>
        <taxon>Alteromonadaceae</taxon>
        <taxon>Paraglaciecola</taxon>
    </lineage>
</organism>
<feature type="signal peptide" evidence="1">
    <location>
        <begin position="1"/>
        <end position="18"/>
    </location>
</feature>
<feature type="chain" id="PRO_5000125533" description="Outer membrane protein assembly factor BamC">
    <location>
        <begin position="19"/>
        <end position="368"/>
    </location>
</feature>
<feature type="lipid moiety-binding region" description="N-palmitoyl cysteine" evidence="1">
    <location>
        <position position="19"/>
    </location>
</feature>
<feature type="lipid moiety-binding region" description="S-diacylglycerol cysteine" evidence="1">
    <location>
        <position position="19"/>
    </location>
</feature>
<name>BAMC_PSEA6</name>
<comment type="function">
    <text evidence="1">Part of the outer membrane protein assembly complex, which is involved in assembly and insertion of beta-barrel proteins into the outer membrane.</text>
</comment>
<comment type="subunit">
    <text evidence="1">Part of the Bam complex.</text>
</comment>
<comment type="subcellular location">
    <subcellularLocation>
        <location evidence="1">Cell outer membrane</location>
        <topology evidence="1">Lipid-anchor</topology>
    </subcellularLocation>
</comment>
<comment type="similarity">
    <text evidence="1">Belongs to the BamC family.</text>
</comment>
<protein>
    <recommendedName>
        <fullName evidence="1">Outer membrane protein assembly factor BamC</fullName>
    </recommendedName>
</protein>
<keyword id="KW-0998">Cell outer membrane</keyword>
<keyword id="KW-0449">Lipoprotein</keyword>
<keyword id="KW-0472">Membrane</keyword>
<keyword id="KW-0564">Palmitate</keyword>
<keyword id="KW-0732">Signal</keyword>
<dbReference type="EMBL" id="CP000388">
    <property type="protein sequence ID" value="ABG40993.1"/>
    <property type="molecule type" value="Genomic_DNA"/>
</dbReference>
<dbReference type="RefSeq" id="WP_011575264.1">
    <property type="nucleotide sequence ID" value="NC_008228.1"/>
</dbReference>
<dbReference type="SMR" id="Q15SZ5"/>
<dbReference type="STRING" id="342610.Patl_2477"/>
<dbReference type="KEGG" id="pat:Patl_2477"/>
<dbReference type="eggNOG" id="COG3317">
    <property type="taxonomic scope" value="Bacteria"/>
</dbReference>
<dbReference type="HOGENOM" id="CLU_063217_0_0_6"/>
<dbReference type="OrthoDB" id="5598420at2"/>
<dbReference type="Proteomes" id="UP000001981">
    <property type="component" value="Chromosome"/>
</dbReference>
<dbReference type="GO" id="GO:0009279">
    <property type="term" value="C:cell outer membrane"/>
    <property type="evidence" value="ECO:0007669"/>
    <property type="project" value="UniProtKB-SubCell"/>
</dbReference>
<dbReference type="GO" id="GO:0043165">
    <property type="term" value="P:Gram-negative-bacterium-type cell outer membrane assembly"/>
    <property type="evidence" value="ECO:0007669"/>
    <property type="project" value="UniProtKB-UniRule"/>
</dbReference>
<dbReference type="GO" id="GO:0051205">
    <property type="term" value="P:protein insertion into membrane"/>
    <property type="evidence" value="ECO:0007669"/>
    <property type="project" value="UniProtKB-UniRule"/>
</dbReference>
<dbReference type="Gene3D" id="3.30.530.50">
    <property type="match status" value="1"/>
</dbReference>
<dbReference type="Gene3D" id="3.30.310.170">
    <property type="entry name" value="Outer membrane protein assembly factor BamC"/>
    <property type="match status" value="1"/>
</dbReference>
<dbReference type="HAMAP" id="MF_00924">
    <property type="entry name" value="OM_assembly_BamC"/>
    <property type="match status" value="1"/>
</dbReference>
<dbReference type="InterPro" id="IPR014524">
    <property type="entry name" value="BamC"/>
</dbReference>
<dbReference type="InterPro" id="IPR042268">
    <property type="entry name" value="BamC_C"/>
</dbReference>
<dbReference type="InterPro" id="IPR010653">
    <property type="entry name" value="NlpB/DapX"/>
</dbReference>
<dbReference type="Pfam" id="PF06804">
    <property type="entry name" value="Lipoprotein_18"/>
    <property type="match status" value="1"/>
</dbReference>
<dbReference type="PROSITE" id="PS51257">
    <property type="entry name" value="PROKAR_LIPOPROTEIN"/>
    <property type="match status" value="1"/>
</dbReference>
<gene>
    <name evidence="1" type="primary">bamC</name>
    <name type="ordered locus">Patl_2477</name>
</gene>
<proteinExistence type="inferred from homology"/>
<reference key="1">
    <citation type="submission" date="2006-06" db="EMBL/GenBank/DDBJ databases">
        <title>Complete sequence of Pseudoalteromonas atlantica T6c.</title>
        <authorList>
            <consortium name="US DOE Joint Genome Institute"/>
            <person name="Copeland A."/>
            <person name="Lucas S."/>
            <person name="Lapidus A."/>
            <person name="Barry K."/>
            <person name="Detter J.C."/>
            <person name="Glavina del Rio T."/>
            <person name="Hammon N."/>
            <person name="Israni S."/>
            <person name="Dalin E."/>
            <person name="Tice H."/>
            <person name="Pitluck S."/>
            <person name="Saunders E."/>
            <person name="Brettin T."/>
            <person name="Bruce D."/>
            <person name="Han C."/>
            <person name="Tapia R."/>
            <person name="Gilna P."/>
            <person name="Schmutz J."/>
            <person name="Larimer F."/>
            <person name="Land M."/>
            <person name="Hauser L."/>
            <person name="Kyrpides N."/>
            <person name="Kim E."/>
            <person name="Karls A.C."/>
            <person name="Bartlett D."/>
            <person name="Higgins B.P."/>
            <person name="Richardson P."/>
        </authorList>
    </citation>
    <scope>NUCLEOTIDE SEQUENCE [LARGE SCALE GENOMIC DNA]</scope>
    <source>
        <strain>T6c / ATCC BAA-1087</strain>
    </source>
</reference>
<evidence type="ECO:0000255" key="1">
    <source>
        <dbReference type="HAMAP-Rule" id="MF_00924"/>
    </source>
</evidence>